<sequence>MNRLQVELPGLSLKNPIIPASGCFGFGREYAQFYDLSVLGSIMIKATTEQPRYGNPTPRVAETPGGMLNAIGLQNPGLEKVMNSELPWLEQFDLPIIANVAGSQAEDYVAVAKEISKAPNVHALELNISCPNVKTGGIAFGTNPEIAADLTKRVKEVSEVPVYVKLSPNVANIVEIAKAIENAGADGLTMINTLLGMRLDLKTAKPILANRTGGLSGPAIKPVAIRMVHEVSQAVNIPIIGMGGIETAEDVIEFFYAGASAVAVGTANFIDPFVCPTIIEELPALLDELGFDHISECQGRSWKQTCHSR</sequence>
<evidence type="ECO:0000250" key="1"/>
<evidence type="ECO:0000305" key="2"/>
<organism>
    <name type="scientific">Bacillus cereus (strain AH820)</name>
    <dbReference type="NCBI Taxonomy" id="405535"/>
    <lineage>
        <taxon>Bacteria</taxon>
        <taxon>Bacillati</taxon>
        <taxon>Bacillota</taxon>
        <taxon>Bacilli</taxon>
        <taxon>Bacillales</taxon>
        <taxon>Bacillaceae</taxon>
        <taxon>Bacillus</taxon>
        <taxon>Bacillus cereus group</taxon>
    </lineage>
</organism>
<comment type="function">
    <text evidence="1">Catalyzes the conversion of dihydroorotate to orotate with NAD(+) as electron acceptor.</text>
</comment>
<comment type="catalytic activity">
    <reaction>
        <text>(S)-dihydroorotate + NAD(+) = orotate + NADH + H(+)</text>
        <dbReference type="Rhea" id="RHEA:13513"/>
        <dbReference type="ChEBI" id="CHEBI:15378"/>
        <dbReference type="ChEBI" id="CHEBI:30839"/>
        <dbReference type="ChEBI" id="CHEBI:30864"/>
        <dbReference type="ChEBI" id="CHEBI:57540"/>
        <dbReference type="ChEBI" id="CHEBI:57945"/>
        <dbReference type="EC" id="1.3.1.14"/>
    </reaction>
</comment>
<comment type="cofactor">
    <cofactor evidence="1">
        <name>FMN</name>
        <dbReference type="ChEBI" id="CHEBI:58210"/>
    </cofactor>
    <text evidence="1">Binds 1 FMN per subunit.</text>
</comment>
<comment type="pathway">
    <text>Pyrimidine metabolism; UMP biosynthesis via de novo pathway; orotate from (S)-dihydroorotate (NAD(+) route): step 1/1.</text>
</comment>
<comment type="subunit">
    <text evidence="1">Heterotetramer of 2 PyrK and 2 PyrD type B subunits.</text>
</comment>
<comment type="subcellular location">
    <subcellularLocation>
        <location evidence="1">Cytoplasm</location>
    </subcellularLocation>
</comment>
<comment type="similarity">
    <text evidence="2">Belongs to the dihydroorotate dehydrogenase family. Type 1 subfamily.</text>
</comment>
<keyword id="KW-0963">Cytoplasm</keyword>
<keyword id="KW-0285">Flavoprotein</keyword>
<keyword id="KW-0288">FMN</keyword>
<keyword id="KW-0520">NAD</keyword>
<keyword id="KW-0560">Oxidoreductase</keyword>
<keyword id="KW-0665">Pyrimidine biosynthesis</keyword>
<accession>B7JJX1</accession>
<dbReference type="EC" id="1.3.1.14"/>
<dbReference type="EMBL" id="CP001283">
    <property type="protein sequence ID" value="ACK91263.1"/>
    <property type="molecule type" value="Genomic_DNA"/>
</dbReference>
<dbReference type="RefSeq" id="WP_001081057.1">
    <property type="nucleotide sequence ID" value="NC_011773.1"/>
</dbReference>
<dbReference type="SMR" id="B7JJX1"/>
<dbReference type="GeneID" id="83637592"/>
<dbReference type="KEGG" id="bcu:BCAH820_3898"/>
<dbReference type="HOGENOM" id="CLU_042042_0_0_9"/>
<dbReference type="UniPathway" id="UPA00070">
    <property type="reaction ID" value="UER00945"/>
</dbReference>
<dbReference type="Proteomes" id="UP000001363">
    <property type="component" value="Chromosome"/>
</dbReference>
<dbReference type="GO" id="GO:0005737">
    <property type="term" value="C:cytoplasm"/>
    <property type="evidence" value="ECO:0007669"/>
    <property type="project" value="UniProtKB-SubCell"/>
</dbReference>
<dbReference type="GO" id="GO:0004589">
    <property type="term" value="F:dihydroorotate dehydrogenase (NAD+) activity"/>
    <property type="evidence" value="ECO:0007669"/>
    <property type="project" value="UniProtKB-EC"/>
</dbReference>
<dbReference type="GO" id="GO:0006207">
    <property type="term" value="P:'de novo' pyrimidine nucleobase biosynthetic process"/>
    <property type="evidence" value="ECO:0007669"/>
    <property type="project" value="InterPro"/>
</dbReference>
<dbReference type="GO" id="GO:0044205">
    <property type="term" value="P:'de novo' UMP biosynthetic process"/>
    <property type="evidence" value="ECO:0007669"/>
    <property type="project" value="UniProtKB-UniRule"/>
</dbReference>
<dbReference type="CDD" id="cd04740">
    <property type="entry name" value="DHOD_1B_like"/>
    <property type="match status" value="1"/>
</dbReference>
<dbReference type="FunFam" id="3.20.20.70:FF:000069">
    <property type="entry name" value="Dihydroorotate dehydrogenase"/>
    <property type="match status" value="1"/>
</dbReference>
<dbReference type="Gene3D" id="3.20.20.70">
    <property type="entry name" value="Aldolase class I"/>
    <property type="match status" value="1"/>
</dbReference>
<dbReference type="HAMAP" id="MF_00224">
    <property type="entry name" value="DHO_dh_type1"/>
    <property type="match status" value="1"/>
</dbReference>
<dbReference type="InterPro" id="IPR013785">
    <property type="entry name" value="Aldolase_TIM"/>
</dbReference>
<dbReference type="InterPro" id="IPR050074">
    <property type="entry name" value="DHO_dehydrogenase"/>
</dbReference>
<dbReference type="InterPro" id="IPR033888">
    <property type="entry name" value="DHOD_1B"/>
</dbReference>
<dbReference type="InterPro" id="IPR024920">
    <property type="entry name" value="Dihydroorotate_DH_1"/>
</dbReference>
<dbReference type="InterPro" id="IPR012135">
    <property type="entry name" value="Dihydroorotate_DH_1_2"/>
</dbReference>
<dbReference type="InterPro" id="IPR005720">
    <property type="entry name" value="Dihydroorotate_DH_cat"/>
</dbReference>
<dbReference type="InterPro" id="IPR001295">
    <property type="entry name" value="Dihydroorotate_DH_CS"/>
</dbReference>
<dbReference type="InterPro" id="IPR049622">
    <property type="entry name" value="Dihydroorotate_DH_I"/>
</dbReference>
<dbReference type="NCBIfam" id="NF005574">
    <property type="entry name" value="PRK07259.1"/>
    <property type="match status" value="1"/>
</dbReference>
<dbReference type="NCBIfam" id="TIGR01037">
    <property type="entry name" value="pyrD_sub1_fam"/>
    <property type="match status" value="1"/>
</dbReference>
<dbReference type="PANTHER" id="PTHR48109:SF1">
    <property type="entry name" value="DIHYDROOROTATE DEHYDROGENASE (FUMARATE)"/>
    <property type="match status" value="1"/>
</dbReference>
<dbReference type="PANTHER" id="PTHR48109">
    <property type="entry name" value="DIHYDROOROTATE DEHYDROGENASE (QUINONE), MITOCHONDRIAL-RELATED"/>
    <property type="match status" value="1"/>
</dbReference>
<dbReference type="Pfam" id="PF01180">
    <property type="entry name" value="DHO_dh"/>
    <property type="match status" value="1"/>
</dbReference>
<dbReference type="PIRSF" id="PIRSF000164">
    <property type="entry name" value="DHO_oxidase"/>
    <property type="match status" value="1"/>
</dbReference>
<dbReference type="SUPFAM" id="SSF51395">
    <property type="entry name" value="FMN-linked oxidoreductases"/>
    <property type="match status" value="1"/>
</dbReference>
<dbReference type="PROSITE" id="PS00911">
    <property type="entry name" value="DHODEHASE_1"/>
    <property type="match status" value="1"/>
</dbReference>
<dbReference type="PROSITE" id="PS00912">
    <property type="entry name" value="DHODEHASE_2"/>
    <property type="match status" value="1"/>
</dbReference>
<proteinExistence type="inferred from homology"/>
<feature type="chain" id="PRO_1000195043" description="Dihydroorotate dehydrogenase B (NAD(+)), catalytic subunit">
    <location>
        <begin position="1"/>
        <end position="309"/>
    </location>
</feature>
<feature type="active site" description="Nucleophile">
    <location>
        <position position="130"/>
    </location>
</feature>
<feature type="binding site" evidence="1">
    <location>
        <position position="21"/>
    </location>
    <ligand>
        <name>FMN</name>
        <dbReference type="ChEBI" id="CHEBI:58210"/>
    </ligand>
</feature>
<feature type="binding site" evidence="1">
    <location>
        <begin position="45"/>
        <end position="46"/>
    </location>
    <ligand>
        <name>FMN</name>
        <dbReference type="ChEBI" id="CHEBI:58210"/>
    </ligand>
</feature>
<feature type="binding site" evidence="1">
    <location>
        <position position="45"/>
    </location>
    <ligand>
        <name>substrate</name>
    </ligand>
</feature>
<feature type="binding site" evidence="1">
    <location>
        <begin position="69"/>
        <end position="73"/>
    </location>
    <ligand>
        <name>substrate</name>
    </ligand>
</feature>
<feature type="binding site" evidence="1">
    <location>
        <position position="99"/>
    </location>
    <ligand>
        <name>FMN</name>
        <dbReference type="ChEBI" id="CHEBI:58210"/>
    </ligand>
</feature>
<feature type="binding site" evidence="1">
    <location>
        <position position="127"/>
    </location>
    <ligand>
        <name>FMN</name>
        <dbReference type="ChEBI" id="CHEBI:58210"/>
    </ligand>
</feature>
<feature type="binding site" evidence="1">
    <location>
        <position position="127"/>
    </location>
    <ligand>
        <name>substrate</name>
    </ligand>
</feature>
<feature type="binding site" evidence="1">
    <location>
        <position position="165"/>
    </location>
    <ligand>
        <name>FMN</name>
        <dbReference type="ChEBI" id="CHEBI:58210"/>
    </ligand>
</feature>
<feature type="binding site" evidence="1">
    <location>
        <position position="191"/>
    </location>
    <ligand>
        <name>FMN</name>
        <dbReference type="ChEBI" id="CHEBI:58210"/>
    </ligand>
</feature>
<feature type="binding site" evidence="1">
    <location>
        <begin position="192"/>
        <end position="193"/>
    </location>
    <ligand>
        <name>substrate</name>
    </ligand>
</feature>
<feature type="binding site" evidence="1">
    <location>
        <position position="217"/>
    </location>
    <ligand>
        <name>FMN</name>
        <dbReference type="ChEBI" id="CHEBI:58210"/>
    </ligand>
</feature>
<feature type="binding site" evidence="1">
    <location>
        <begin position="243"/>
        <end position="244"/>
    </location>
    <ligand>
        <name>FMN</name>
        <dbReference type="ChEBI" id="CHEBI:58210"/>
    </ligand>
</feature>
<feature type="binding site" evidence="1">
    <location>
        <begin position="265"/>
        <end position="266"/>
    </location>
    <ligand>
        <name>FMN</name>
        <dbReference type="ChEBI" id="CHEBI:58210"/>
    </ligand>
</feature>
<gene>
    <name type="primary">pyrD</name>
    <name type="ordered locus">BCAH820_3898</name>
</gene>
<reference key="1">
    <citation type="submission" date="2008-10" db="EMBL/GenBank/DDBJ databases">
        <title>Genome sequence of Bacillus cereus AH820.</title>
        <authorList>
            <person name="Dodson R.J."/>
            <person name="Durkin A.S."/>
            <person name="Rosovitz M.J."/>
            <person name="Rasko D.A."/>
            <person name="Hoffmaster A."/>
            <person name="Ravel J."/>
            <person name="Sutton G."/>
        </authorList>
    </citation>
    <scope>NUCLEOTIDE SEQUENCE [LARGE SCALE GENOMIC DNA]</scope>
    <source>
        <strain>AH820</strain>
    </source>
</reference>
<name>PYRDB_BACC0</name>
<protein>
    <recommendedName>
        <fullName>Dihydroorotate dehydrogenase B (NAD(+)), catalytic subunit</fullName>
        <shortName>DHOD B</shortName>
        <shortName>DHODase B</shortName>
        <shortName>DHOdehase B</shortName>
        <ecNumber>1.3.1.14</ecNumber>
    </recommendedName>
    <alternativeName>
        <fullName>Dihydroorotate oxidase B</fullName>
    </alternativeName>
    <alternativeName>
        <fullName>Orotate reductase (NADH)</fullName>
    </alternativeName>
</protein>